<gene>
    <name evidence="1" type="primary">opgH</name>
    <name type="ordered locus">VC_1287</name>
</gene>
<sequence>MTNPMVEQGASQLMGGSAMPPEQHGEMPEQNLKRLSEGFPRDAIQTGGVKSCSWRRVFVVGFALLISAFAIFEMRGVFLVGGLTPIEYAVLVLFAINFCWIALAFSSSIAGFFVLASRKPAPNTEQPLTTRTAILMPTYNEAPDRVFAAVETMALALAKTEHGHAFDWFILSDTTDPEVALSEEQAFWLLRQQTAGKANVYYRRRRKNIARKAGNIADFCRRWGSGYDHLLVLDADSVMQPSTMISLAQRMQSDPDAGLIQTIPALINGTTLMARVQQFAARIYGPVVGTGLAWWVQKEGNFWGHNAIIRTEAFMSAAGLPHLSGRPPFGGHILSHDFVEAALIRRAGWSVTIAADLSGSFEECPPSIIDLAVRDRRWCQGNLQHSRIIGTKGLHWISRLHLTTGIMSYLSSPFWLLLILSGLLLALQAHFIRPEYFTEQFSLFPTWPVMDSARALQLFYITMGILFSPKIFGLLLLMFDGEMCRTLGGRLRVILSAVTEILLSALVAPIMMLIHCGAVVSILFGRDSGWAPQRRDDGSLPIKDLLYRHRWHMTAGVLLGYAAMLDSWTLLAWMSPALIGLWFSVPLSGITASYTIGAWFKQKRILATPEEIETPAIVLAAQARRDEYVVDLQEVWNARMVLADHNLIALHIAMMDKLPSRQPGTAIEPLDAVARIKVQEAESQESLLALLTKVELSYVLGNPLLIQQVAKLPPSLANQTV</sequence>
<feature type="chain" id="PRO_0000210365" description="Glucans biosynthesis glucosyltransferase H">
    <location>
        <begin position="1"/>
        <end position="721"/>
    </location>
</feature>
<feature type="transmembrane region" description="Helical" evidence="1">
    <location>
        <begin position="57"/>
        <end position="79"/>
    </location>
</feature>
<feature type="transmembrane region" description="Helical" evidence="1">
    <location>
        <begin position="94"/>
        <end position="116"/>
    </location>
</feature>
<feature type="transmembrane region" description="Helical" evidence="1">
    <location>
        <begin position="410"/>
        <end position="432"/>
    </location>
</feature>
<feature type="transmembrane region" description="Helical" evidence="1">
    <location>
        <begin position="457"/>
        <end position="479"/>
    </location>
</feature>
<feature type="transmembrane region" description="Helical" evidence="1">
    <location>
        <begin position="492"/>
        <end position="514"/>
    </location>
</feature>
<feature type="transmembrane region" description="Helical" evidence="1">
    <location>
        <begin position="551"/>
        <end position="573"/>
    </location>
</feature>
<feature type="transmembrane region" description="Helical" evidence="1">
    <location>
        <begin position="578"/>
        <end position="600"/>
    </location>
</feature>
<reference key="1">
    <citation type="journal article" date="2000" name="Nature">
        <title>DNA sequence of both chromosomes of the cholera pathogen Vibrio cholerae.</title>
        <authorList>
            <person name="Heidelberg J.F."/>
            <person name="Eisen J.A."/>
            <person name="Nelson W.C."/>
            <person name="Clayton R.A."/>
            <person name="Gwinn M.L."/>
            <person name="Dodson R.J."/>
            <person name="Haft D.H."/>
            <person name="Hickey E.K."/>
            <person name="Peterson J.D."/>
            <person name="Umayam L.A."/>
            <person name="Gill S.R."/>
            <person name="Nelson K.E."/>
            <person name="Read T.D."/>
            <person name="Tettelin H."/>
            <person name="Richardson D.L."/>
            <person name="Ermolaeva M.D."/>
            <person name="Vamathevan J.J."/>
            <person name="Bass S."/>
            <person name="Qin H."/>
            <person name="Dragoi I."/>
            <person name="Sellers P."/>
            <person name="McDonald L.A."/>
            <person name="Utterback T.R."/>
            <person name="Fleischmann R.D."/>
            <person name="Nierman W.C."/>
            <person name="White O."/>
            <person name="Salzberg S.L."/>
            <person name="Smith H.O."/>
            <person name="Colwell R.R."/>
            <person name="Mekalanos J.J."/>
            <person name="Venter J.C."/>
            <person name="Fraser C.M."/>
        </authorList>
    </citation>
    <scope>NUCLEOTIDE SEQUENCE [LARGE SCALE GENOMIC DNA]</scope>
    <source>
        <strain>ATCC 39315 / El Tor Inaba N16961</strain>
    </source>
</reference>
<name>OPGH_VIBCH</name>
<dbReference type="EC" id="2.4.1.-" evidence="1"/>
<dbReference type="EMBL" id="AE003852">
    <property type="protein sequence ID" value="AAF94446.1"/>
    <property type="molecule type" value="Genomic_DNA"/>
</dbReference>
<dbReference type="PIR" id="B82218">
    <property type="entry name" value="B82218"/>
</dbReference>
<dbReference type="RefSeq" id="NP_230932.1">
    <property type="nucleotide sequence ID" value="NC_002505.1"/>
</dbReference>
<dbReference type="STRING" id="243277.VC_1287"/>
<dbReference type="CAZy" id="GT2">
    <property type="family name" value="Glycosyltransferase Family 2"/>
</dbReference>
<dbReference type="DNASU" id="2614741"/>
<dbReference type="EnsemblBacteria" id="AAF94446">
    <property type="protein sequence ID" value="AAF94446"/>
    <property type="gene ID" value="VC_1287"/>
</dbReference>
<dbReference type="KEGG" id="vch:VC_1287"/>
<dbReference type="PATRIC" id="fig|243277.26.peg.1226"/>
<dbReference type="eggNOG" id="COG2943">
    <property type="taxonomic scope" value="Bacteria"/>
</dbReference>
<dbReference type="HOGENOM" id="CLU_015730_1_0_6"/>
<dbReference type="UniPathway" id="UPA00637"/>
<dbReference type="Proteomes" id="UP000000584">
    <property type="component" value="Chromosome 1"/>
</dbReference>
<dbReference type="GO" id="GO:0005886">
    <property type="term" value="C:plasma membrane"/>
    <property type="evidence" value="ECO:0000318"/>
    <property type="project" value="GO_Central"/>
</dbReference>
<dbReference type="GO" id="GO:0016758">
    <property type="term" value="F:hexosyltransferase activity"/>
    <property type="evidence" value="ECO:0000318"/>
    <property type="project" value="GO_Central"/>
</dbReference>
<dbReference type="GO" id="GO:0009250">
    <property type="term" value="P:glucan biosynthetic process"/>
    <property type="evidence" value="ECO:0007669"/>
    <property type="project" value="UniProtKB-UniRule"/>
</dbReference>
<dbReference type="CDD" id="cd04191">
    <property type="entry name" value="Glucan_BSP_MdoH"/>
    <property type="match status" value="1"/>
</dbReference>
<dbReference type="Gene3D" id="3.90.550.10">
    <property type="entry name" value="Spore Coat Polysaccharide Biosynthesis Protein SpsA, Chain A"/>
    <property type="match status" value="1"/>
</dbReference>
<dbReference type="HAMAP" id="MF_01072">
    <property type="entry name" value="MdoH_OpgH"/>
    <property type="match status" value="1"/>
</dbReference>
<dbReference type="InterPro" id="IPR023725">
    <property type="entry name" value="Glucans_biosynth_gluTrFase_H"/>
</dbReference>
<dbReference type="InterPro" id="IPR001173">
    <property type="entry name" value="Glyco_trans_2-like"/>
</dbReference>
<dbReference type="InterPro" id="IPR050321">
    <property type="entry name" value="Glycosyltr_2/OpgH_subfam"/>
</dbReference>
<dbReference type="InterPro" id="IPR029044">
    <property type="entry name" value="Nucleotide-diphossugar_trans"/>
</dbReference>
<dbReference type="NCBIfam" id="NF003956">
    <property type="entry name" value="PRK05454.1-3"/>
    <property type="match status" value="1"/>
</dbReference>
<dbReference type="NCBIfam" id="NF003958">
    <property type="entry name" value="PRK05454.2-1"/>
    <property type="match status" value="1"/>
</dbReference>
<dbReference type="NCBIfam" id="NF003962">
    <property type="entry name" value="PRK05454.2-5"/>
    <property type="match status" value="1"/>
</dbReference>
<dbReference type="PANTHER" id="PTHR43867">
    <property type="entry name" value="CELLULOSE SYNTHASE CATALYTIC SUBUNIT A [UDP-FORMING]"/>
    <property type="match status" value="1"/>
</dbReference>
<dbReference type="PANTHER" id="PTHR43867:SF5">
    <property type="entry name" value="GLUCANS BIOSYNTHESIS GLUCOSYLTRANSFERASE H"/>
    <property type="match status" value="1"/>
</dbReference>
<dbReference type="Pfam" id="PF13632">
    <property type="entry name" value="Glyco_trans_2_3"/>
    <property type="match status" value="1"/>
</dbReference>
<dbReference type="SUPFAM" id="SSF53448">
    <property type="entry name" value="Nucleotide-diphospho-sugar transferases"/>
    <property type="match status" value="1"/>
</dbReference>
<evidence type="ECO:0000255" key="1">
    <source>
        <dbReference type="HAMAP-Rule" id="MF_01072"/>
    </source>
</evidence>
<keyword id="KW-0997">Cell inner membrane</keyword>
<keyword id="KW-1003">Cell membrane</keyword>
<keyword id="KW-0328">Glycosyltransferase</keyword>
<keyword id="KW-0472">Membrane</keyword>
<keyword id="KW-1185">Reference proteome</keyword>
<keyword id="KW-0808">Transferase</keyword>
<keyword id="KW-0812">Transmembrane</keyword>
<keyword id="KW-1133">Transmembrane helix</keyword>
<accession>Q9KSG9</accession>
<comment type="function">
    <text evidence="1">Involved in the biosynthesis of osmoregulated periplasmic glucans (OPGs).</text>
</comment>
<comment type="pathway">
    <text evidence="1">Glycan metabolism; osmoregulated periplasmic glucan (OPG) biosynthesis.</text>
</comment>
<comment type="subcellular location">
    <subcellularLocation>
        <location evidence="1">Cell inner membrane</location>
        <topology evidence="1">Multi-pass membrane protein</topology>
    </subcellularLocation>
</comment>
<comment type="similarity">
    <text evidence="1">Belongs to the glycosyltransferase 2 family. OpgH subfamily.</text>
</comment>
<organism>
    <name type="scientific">Vibrio cholerae serotype O1 (strain ATCC 39315 / El Tor Inaba N16961)</name>
    <dbReference type="NCBI Taxonomy" id="243277"/>
    <lineage>
        <taxon>Bacteria</taxon>
        <taxon>Pseudomonadati</taxon>
        <taxon>Pseudomonadota</taxon>
        <taxon>Gammaproteobacteria</taxon>
        <taxon>Vibrionales</taxon>
        <taxon>Vibrionaceae</taxon>
        <taxon>Vibrio</taxon>
    </lineage>
</organism>
<protein>
    <recommendedName>
        <fullName evidence="1">Glucans biosynthesis glucosyltransferase H</fullName>
        <ecNumber evidence="1">2.4.1.-</ecNumber>
    </recommendedName>
</protein>
<proteinExistence type="inferred from homology"/>